<protein>
    <recommendedName>
        <fullName evidence="1">Leucine--tRNA ligase</fullName>
        <ecNumber evidence="1">6.1.1.4</ecNumber>
    </recommendedName>
    <alternativeName>
        <fullName evidence="1">Leucyl-tRNA synthetase</fullName>
        <shortName evidence="1">LeuRS</shortName>
    </alternativeName>
</protein>
<proteinExistence type="inferred from homology"/>
<keyword id="KW-0030">Aminoacyl-tRNA synthetase</keyword>
<keyword id="KW-0067">ATP-binding</keyword>
<keyword id="KW-0963">Cytoplasm</keyword>
<keyword id="KW-0436">Ligase</keyword>
<keyword id="KW-0547">Nucleotide-binding</keyword>
<keyword id="KW-0648">Protein biosynthesis</keyword>
<dbReference type="EC" id="6.1.1.4" evidence="1"/>
<dbReference type="EMBL" id="AM286280">
    <property type="protein sequence ID" value="CAL09006.1"/>
    <property type="molecule type" value="Genomic_DNA"/>
</dbReference>
<dbReference type="RefSeq" id="WP_003021076.1">
    <property type="nucleotide sequence ID" value="NC_008245.1"/>
</dbReference>
<dbReference type="SMR" id="Q14HL6"/>
<dbReference type="KEGG" id="ftf:FTF0990"/>
<dbReference type="HOGENOM" id="CLU_004427_0_0_6"/>
<dbReference type="GO" id="GO:0005829">
    <property type="term" value="C:cytosol"/>
    <property type="evidence" value="ECO:0007669"/>
    <property type="project" value="TreeGrafter"/>
</dbReference>
<dbReference type="GO" id="GO:0002161">
    <property type="term" value="F:aminoacyl-tRNA deacylase activity"/>
    <property type="evidence" value="ECO:0007669"/>
    <property type="project" value="InterPro"/>
</dbReference>
<dbReference type="GO" id="GO:0005524">
    <property type="term" value="F:ATP binding"/>
    <property type="evidence" value="ECO:0007669"/>
    <property type="project" value="UniProtKB-UniRule"/>
</dbReference>
<dbReference type="GO" id="GO:0004823">
    <property type="term" value="F:leucine-tRNA ligase activity"/>
    <property type="evidence" value="ECO:0007669"/>
    <property type="project" value="UniProtKB-UniRule"/>
</dbReference>
<dbReference type="GO" id="GO:0006429">
    <property type="term" value="P:leucyl-tRNA aminoacylation"/>
    <property type="evidence" value="ECO:0007669"/>
    <property type="project" value="UniProtKB-UniRule"/>
</dbReference>
<dbReference type="CDD" id="cd07958">
    <property type="entry name" value="Anticodon_Ia_Leu_BEm"/>
    <property type="match status" value="1"/>
</dbReference>
<dbReference type="CDD" id="cd00812">
    <property type="entry name" value="LeuRS_core"/>
    <property type="match status" value="1"/>
</dbReference>
<dbReference type="FunFam" id="1.10.730.10:FF:000002">
    <property type="entry name" value="Leucine--tRNA ligase"/>
    <property type="match status" value="1"/>
</dbReference>
<dbReference type="FunFam" id="3.10.20.590:FF:000001">
    <property type="entry name" value="Leucine--tRNA ligase"/>
    <property type="match status" value="1"/>
</dbReference>
<dbReference type="FunFam" id="3.40.50.620:FF:000056">
    <property type="entry name" value="Leucine--tRNA ligase"/>
    <property type="match status" value="1"/>
</dbReference>
<dbReference type="FunFam" id="3.40.50.620:FF:000395">
    <property type="entry name" value="Leucine--tRNA ligase"/>
    <property type="match status" value="1"/>
</dbReference>
<dbReference type="FunFam" id="3.90.740.10:FF:000012">
    <property type="entry name" value="Leucine--tRNA ligase"/>
    <property type="match status" value="1"/>
</dbReference>
<dbReference type="Gene3D" id="3.10.20.590">
    <property type="match status" value="1"/>
</dbReference>
<dbReference type="Gene3D" id="3.40.50.620">
    <property type="entry name" value="HUPs"/>
    <property type="match status" value="2"/>
</dbReference>
<dbReference type="Gene3D" id="1.10.730.10">
    <property type="entry name" value="Isoleucyl-tRNA Synthetase, Domain 1"/>
    <property type="match status" value="1"/>
</dbReference>
<dbReference type="HAMAP" id="MF_00049_B">
    <property type="entry name" value="Leu_tRNA_synth_B"/>
    <property type="match status" value="1"/>
</dbReference>
<dbReference type="InterPro" id="IPR001412">
    <property type="entry name" value="aa-tRNA-synth_I_CS"/>
</dbReference>
<dbReference type="InterPro" id="IPR002300">
    <property type="entry name" value="aa-tRNA-synth_Ia"/>
</dbReference>
<dbReference type="InterPro" id="IPR002302">
    <property type="entry name" value="Leu-tRNA-ligase"/>
</dbReference>
<dbReference type="InterPro" id="IPR025709">
    <property type="entry name" value="Leu_tRNA-synth_edit"/>
</dbReference>
<dbReference type="InterPro" id="IPR013155">
    <property type="entry name" value="M/V/L/I-tRNA-synth_anticd-bd"/>
</dbReference>
<dbReference type="InterPro" id="IPR015413">
    <property type="entry name" value="Methionyl/Leucyl_tRNA_Synth"/>
</dbReference>
<dbReference type="InterPro" id="IPR014729">
    <property type="entry name" value="Rossmann-like_a/b/a_fold"/>
</dbReference>
<dbReference type="InterPro" id="IPR009080">
    <property type="entry name" value="tRNAsynth_Ia_anticodon-bd"/>
</dbReference>
<dbReference type="InterPro" id="IPR009008">
    <property type="entry name" value="Val/Leu/Ile-tRNA-synth_edit"/>
</dbReference>
<dbReference type="NCBIfam" id="TIGR00396">
    <property type="entry name" value="leuS_bact"/>
    <property type="match status" value="1"/>
</dbReference>
<dbReference type="PANTHER" id="PTHR43740:SF2">
    <property type="entry name" value="LEUCINE--TRNA LIGASE, MITOCHONDRIAL"/>
    <property type="match status" value="1"/>
</dbReference>
<dbReference type="PANTHER" id="PTHR43740">
    <property type="entry name" value="LEUCYL-TRNA SYNTHETASE"/>
    <property type="match status" value="1"/>
</dbReference>
<dbReference type="Pfam" id="PF08264">
    <property type="entry name" value="Anticodon_1"/>
    <property type="match status" value="1"/>
</dbReference>
<dbReference type="Pfam" id="PF00133">
    <property type="entry name" value="tRNA-synt_1"/>
    <property type="match status" value="1"/>
</dbReference>
<dbReference type="Pfam" id="PF13603">
    <property type="entry name" value="tRNA-synt_1_2"/>
    <property type="match status" value="1"/>
</dbReference>
<dbReference type="Pfam" id="PF09334">
    <property type="entry name" value="tRNA-synt_1g"/>
    <property type="match status" value="1"/>
</dbReference>
<dbReference type="PRINTS" id="PR00985">
    <property type="entry name" value="TRNASYNTHLEU"/>
</dbReference>
<dbReference type="SUPFAM" id="SSF47323">
    <property type="entry name" value="Anticodon-binding domain of a subclass of class I aminoacyl-tRNA synthetases"/>
    <property type="match status" value="1"/>
</dbReference>
<dbReference type="SUPFAM" id="SSF52374">
    <property type="entry name" value="Nucleotidylyl transferase"/>
    <property type="match status" value="1"/>
</dbReference>
<dbReference type="SUPFAM" id="SSF50677">
    <property type="entry name" value="ValRS/IleRS/LeuRS editing domain"/>
    <property type="match status" value="1"/>
</dbReference>
<dbReference type="PROSITE" id="PS00178">
    <property type="entry name" value="AA_TRNA_LIGASE_I"/>
    <property type="match status" value="1"/>
</dbReference>
<reference key="1">
    <citation type="journal article" date="2007" name="PLoS ONE">
        <title>Genome sequencing shows that European isolates of Francisella tularensis subspecies tularensis are almost identical to US laboratory strain Schu S4.</title>
        <authorList>
            <person name="Chaudhuri R.R."/>
            <person name="Ren C.-P."/>
            <person name="Desmond L."/>
            <person name="Vincent G.A."/>
            <person name="Silman N.J."/>
            <person name="Brehm J.K."/>
            <person name="Elmore M.J."/>
            <person name="Hudson M.J."/>
            <person name="Forsman M."/>
            <person name="Isherwood K.E."/>
            <person name="Gurycova D."/>
            <person name="Minton N.P."/>
            <person name="Titball R.W."/>
            <person name="Pallen M.J."/>
            <person name="Vipond R."/>
        </authorList>
    </citation>
    <scope>NUCLEOTIDE SEQUENCE [LARGE SCALE GENOMIC DNA]</scope>
    <source>
        <strain>FSC 198</strain>
    </source>
</reference>
<name>SYL_FRAT1</name>
<organism>
    <name type="scientific">Francisella tularensis subsp. tularensis (strain FSC 198)</name>
    <dbReference type="NCBI Taxonomy" id="393115"/>
    <lineage>
        <taxon>Bacteria</taxon>
        <taxon>Pseudomonadati</taxon>
        <taxon>Pseudomonadota</taxon>
        <taxon>Gammaproteobacteria</taxon>
        <taxon>Thiotrichales</taxon>
        <taxon>Francisellaceae</taxon>
        <taxon>Francisella</taxon>
    </lineage>
</organism>
<feature type="chain" id="PRO_1000009340" description="Leucine--tRNA ligase">
    <location>
        <begin position="1"/>
        <end position="813"/>
    </location>
</feature>
<feature type="short sequence motif" description="'HIGH' region">
    <location>
        <begin position="41"/>
        <end position="51"/>
    </location>
</feature>
<feature type="short sequence motif" description="'KMSKS' region">
    <location>
        <begin position="575"/>
        <end position="579"/>
    </location>
</feature>
<feature type="binding site" evidence="1">
    <location>
        <position position="578"/>
    </location>
    <ligand>
        <name>ATP</name>
        <dbReference type="ChEBI" id="CHEBI:30616"/>
    </ligand>
</feature>
<gene>
    <name evidence="1" type="primary">leuS</name>
    <name type="ordered locus">FTF0990</name>
</gene>
<comment type="catalytic activity">
    <reaction evidence="1">
        <text>tRNA(Leu) + L-leucine + ATP = L-leucyl-tRNA(Leu) + AMP + diphosphate</text>
        <dbReference type="Rhea" id="RHEA:11688"/>
        <dbReference type="Rhea" id="RHEA-COMP:9613"/>
        <dbReference type="Rhea" id="RHEA-COMP:9622"/>
        <dbReference type="ChEBI" id="CHEBI:30616"/>
        <dbReference type="ChEBI" id="CHEBI:33019"/>
        <dbReference type="ChEBI" id="CHEBI:57427"/>
        <dbReference type="ChEBI" id="CHEBI:78442"/>
        <dbReference type="ChEBI" id="CHEBI:78494"/>
        <dbReference type="ChEBI" id="CHEBI:456215"/>
        <dbReference type="EC" id="6.1.1.4"/>
    </reaction>
</comment>
<comment type="subcellular location">
    <subcellularLocation>
        <location evidence="1">Cytoplasm</location>
    </subcellularLocation>
</comment>
<comment type="similarity">
    <text evidence="1">Belongs to the class-I aminoacyl-tRNA synthetase family.</text>
</comment>
<evidence type="ECO:0000255" key="1">
    <source>
        <dbReference type="HAMAP-Rule" id="MF_00049"/>
    </source>
</evidence>
<sequence length="813" mass="93431">MNEYNFSDIEKSTQEYWRKNDTFKTIEDNTKEKFYCLSMLPYPSGTLHMGHVRNYTIGDVIARYQKMQGKNVLHPMGWDAFGLPAENAAIKHKKSPYEWTKSNIAYMRSQFDSLGFSFDWSREITTCDEDYYKWEQWFFIQLYKKGLAYRKNSVVNWDPVDQTVLANEQVVDGRGWRSGALVEKKEIPQWFLKITDYADELLQDINKLDNWPEAVKTMQINWIGKSKGLTVKFKVKDSNQEIEVFTTRPDTLMGVNYLGIAPEHPLALKEAKSNSQLAAFIEECKKTSTMEADLATQEKKGFKTSIKVIHPISAETIDVWVANFVLMGYGSGAVMSVPAHDQRDWEFAQKYNIPLKQVIESNDNKLKIDLEKQAFTEKGILINSGEFDGLNFKNAYQAIKKYLTEQNKGYETTNFRIHDWGISRQRYWGCPIPMIHCDDCGAVPEKEENLPVRLPTDVALTEAGSPLKDIPEFINVACPECGKPAKRETDTFDTFFESSWYYARYTCPTANQMLDQEANYWLPVDKYIGGIEHAIMHLLYARFFHKLMRDQGLVKSDEPFKNLLTQGMVLKDGAKMSKSKGNIVDPQELIDKYGADTVRLFSMFAAPPEQSLEWSETGVEGANKFLRKVFNYAELNKVIFAKNITLESQKLTKEDKKARFEIHSNLKQAIFDFDKSQFNTVVSACMKILNTLNNYDNLSESVKVEGFSILLRILAPFTPHLCHYLWQQLNLGEDILHTSFPTVDNNALEKDEFLLVVQINGKLKAKLELDASLSSNQVEEVVLADEHVKSFIDNKQVVKVIYVPQKLINIVIK</sequence>
<accession>Q14HL6</accession>